<feature type="chain" id="PRO_0000099427" description="Core protein OPG115">
    <location>
        <begin position="1"/>
        <end position="233"/>
    </location>
</feature>
<dbReference type="EMBL" id="U94848">
    <property type="protein sequence ID" value="AAB96512.1"/>
    <property type="molecule type" value="Genomic_DNA"/>
</dbReference>
<dbReference type="EMBL" id="AY603355">
    <property type="protein sequence ID" value="AAT10498.1"/>
    <property type="molecule type" value="Genomic_DNA"/>
</dbReference>
<dbReference type="PIR" id="T37376">
    <property type="entry name" value="T37376"/>
</dbReference>
<dbReference type="Proteomes" id="UP000159908">
    <property type="component" value="Segment"/>
</dbReference>
<dbReference type="Proteomes" id="UP000172909">
    <property type="component" value="Segment"/>
</dbReference>
<dbReference type="GO" id="GO:0044423">
    <property type="term" value="C:virion component"/>
    <property type="evidence" value="ECO:0007669"/>
    <property type="project" value="UniProtKB-KW"/>
</dbReference>
<dbReference type="InterPro" id="IPR007660">
    <property type="entry name" value="Poxvirus_D3"/>
</dbReference>
<dbReference type="Pfam" id="PF04580">
    <property type="entry name" value="Pox_D3"/>
    <property type="match status" value="1"/>
</dbReference>
<reference key="1">
    <citation type="journal article" date="1998" name="Virology">
        <title>The complete genomic sequence of the modified vaccinia Ankara strain: comparison with other orthopoxviruses.</title>
        <authorList>
            <person name="Antoine G."/>
            <person name="Scheiflinger F."/>
            <person name="Dorner F."/>
            <person name="Falkner F.G."/>
        </authorList>
    </citation>
    <scope>NUCLEOTIDE SEQUENCE [LARGE SCALE GENOMIC DNA]</scope>
</reference>
<reference key="2">
    <citation type="submission" date="2004-04" db="EMBL/GenBank/DDBJ databases">
        <authorList>
            <person name="Esposito J.J."/>
            <person name="Frace M."/>
            <person name="Sammons S.A."/>
            <person name="Olsen-Rasmussen M.S."/>
            <person name="Osborne J."/>
            <person name="Khristova M."/>
            <person name="Wohlhueter R.M."/>
        </authorList>
    </citation>
    <scope>NUCLEOTIDE SEQUENCE [LARGE SCALE GENOMIC DNA]</scope>
    <source>
        <strain>Isolate Acambis 3000</strain>
    </source>
</reference>
<accession>O57210</accession>
<sequence>MDIFIVKDNKYPKVDNDDNEVFILLGNHNDFIRSKLTKLKEHVFFSEYIVTPDTYGSLCVELNGSSFQHGGRYIEVEEFIDAGRQVRWCSTSNHISEDMHTDKFVIYDIYTFDSFKNKRLVFVQVPPSLGDDSYLTNPLLSPYYRNSVARQMVNDMIFNQDSFLKYLLEHLIRSHYRVSKHITIVRYKDTEELNLTRICYNRDKFKAFVFAWFNGVSENEKVLDTYKKVSNLI</sequence>
<gene>
    <name type="primary">OPG115</name>
    <name type="ordered locus">MVA100R</name>
    <name type="ordered locus">ACAM3000_MVA_100</name>
    <name type="ORF">D3R</name>
</gene>
<comment type="function">
    <text evidence="1">Late protein which is part of a large complex required for early virion morphogenesis. This complex participates in the formation of virosomes and the incorporation of virosomal contents into nascent immature virions.</text>
</comment>
<comment type="subunit">
    <text evidence="1">Part of a complex composed of the kinase OPG054, OPG092, OPG100, OPG114, OPG115, OPG142 and OPG157.</text>
</comment>
<comment type="subcellular location">
    <subcellularLocation>
        <location evidence="1">Virion</location>
    </subcellularLocation>
    <text evidence="1">Localizes to the virion core.</text>
</comment>
<comment type="induction">
    <text>Expressed in the late phase of the viral replicative cycle.</text>
</comment>
<comment type="similarity">
    <text evidence="2">Belongs to the orthopoxvirus OPG115 family.</text>
</comment>
<organism>
    <name type="scientific">Vaccinia virus (strain Ankara)</name>
    <name type="common">VACV</name>
    <dbReference type="NCBI Taxonomy" id="126794"/>
    <lineage>
        <taxon>Viruses</taxon>
        <taxon>Varidnaviria</taxon>
        <taxon>Bamfordvirae</taxon>
        <taxon>Nucleocytoviricota</taxon>
        <taxon>Pokkesviricetes</taxon>
        <taxon>Chitovirales</taxon>
        <taxon>Poxviridae</taxon>
        <taxon>Chordopoxvirinae</taxon>
        <taxon>Orthopoxvirus</taxon>
        <taxon>Vaccinia virus</taxon>
    </lineage>
</organism>
<protein>
    <recommendedName>
        <fullName>Core protein OPG115</fullName>
    </recommendedName>
    <alternativeName>
        <fullName>27 kDa virion core protein</fullName>
    </alternativeName>
</protein>
<proteinExistence type="evidence at transcript level"/>
<organismHost>
    <name type="scientific">Homo sapiens</name>
    <name type="common">Human</name>
    <dbReference type="NCBI Taxonomy" id="9606"/>
</organismHost>
<keyword id="KW-0426">Late protein</keyword>
<keyword id="KW-0946">Virion</keyword>
<evidence type="ECO:0000250" key="1">
    <source>
        <dbReference type="UniProtKB" id="P04302"/>
    </source>
</evidence>
<evidence type="ECO:0000305" key="2"/>
<name>PG115_VACCA</name>